<accession>Q9LHF0</accession>
<proteinExistence type="evidence at protein level"/>
<name>ZHD9_ARATH</name>
<sequence>MLEVRSMDMTPKSPEPESETPTRIQPAKPISFSNGIIKRHHHHHHNNNKVTYKECLKNHAAAIGGHALDGCGEFMPSPSSTPSDPTSLKCAACGCHRNFHRRETDDSSAVPPPSLLPSSTTTAAIEYQPHHRHHPPPPLAPPLPRSPNSSSPPPISSSYMLLALSGNNKTAPFSDLNFAAAANHLSATPGSRKRFRTKFSSNQKEKMHEFADRIGWKIQKRDEDEVRDFCREIGVDKGVLKVWMHNNKNSFKFSGGGATTVQRNDNGIGGENSNDDGVRGLANDGDGGGGRFESDSGGADGGGNVNASSSSS</sequence>
<protein>
    <recommendedName>
        <fullName>Zinc-finger homeodomain protein 9</fullName>
        <shortName>AtZHD9</shortName>
    </recommendedName>
    <alternativeName>
        <fullName>Homeobox protein 34</fullName>
        <shortName>AtHB-34</shortName>
    </alternativeName>
</protein>
<dbReference type="EMBL" id="AP002049">
    <property type="protein sequence ID" value="BAB02255.1"/>
    <property type="molecule type" value="Genomic_DNA"/>
</dbReference>
<dbReference type="EMBL" id="CP002686">
    <property type="protein sequence ID" value="AEE77508.1"/>
    <property type="molecule type" value="Genomic_DNA"/>
</dbReference>
<dbReference type="EMBL" id="AY093171">
    <property type="protein sequence ID" value="AAM13170.1"/>
    <property type="molecule type" value="mRNA"/>
</dbReference>
<dbReference type="EMBL" id="AY128820">
    <property type="protein sequence ID" value="AAM91220.1"/>
    <property type="molecule type" value="mRNA"/>
</dbReference>
<dbReference type="RefSeq" id="NP_189534.1">
    <property type="nucleotide sequence ID" value="NM_113813.4"/>
</dbReference>
<dbReference type="SMR" id="Q9LHF0"/>
<dbReference type="BioGRID" id="7856">
    <property type="interactions" value="26"/>
</dbReference>
<dbReference type="FunCoup" id="Q9LHF0">
    <property type="interactions" value="210"/>
</dbReference>
<dbReference type="IntAct" id="Q9LHF0">
    <property type="interactions" value="25"/>
</dbReference>
<dbReference type="STRING" id="3702.Q9LHF0"/>
<dbReference type="GlyGen" id="Q9LHF0">
    <property type="glycosylation" value="2 sites, 1 O-linked glycan (1 site)"/>
</dbReference>
<dbReference type="iPTMnet" id="Q9LHF0"/>
<dbReference type="PaxDb" id="3702-AT3G28920.1"/>
<dbReference type="ProteomicsDB" id="232344"/>
<dbReference type="EnsemblPlants" id="AT3G28920.1">
    <property type="protein sequence ID" value="AT3G28920.1"/>
    <property type="gene ID" value="AT3G28920"/>
</dbReference>
<dbReference type="GeneID" id="822527"/>
<dbReference type="Gramene" id="AT3G28920.1">
    <property type="protein sequence ID" value="AT3G28920.1"/>
    <property type="gene ID" value="AT3G28920"/>
</dbReference>
<dbReference type="KEGG" id="ath:AT3G28920"/>
<dbReference type="Araport" id="AT3G28920"/>
<dbReference type="TAIR" id="AT3G28920">
    <property type="gene designation" value="HB34"/>
</dbReference>
<dbReference type="eggNOG" id="ENOG502QWG3">
    <property type="taxonomic scope" value="Eukaryota"/>
</dbReference>
<dbReference type="HOGENOM" id="CLU_039237_0_0_1"/>
<dbReference type="InParanoid" id="Q9LHF0"/>
<dbReference type="OMA" id="HTPGSRK"/>
<dbReference type="PhylomeDB" id="Q9LHF0"/>
<dbReference type="PRO" id="PR:Q9LHF0"/>
<dbReference type="Proteomes" id="UP000006548">
    <property type="component" value="Chromosome 3"/>
</dbReference>
<dbReference type="ExpressionAtlas" id="Q9LHF0">
    <property type="expression patterns" value="baseline and differential"/>
</dbReference>
<dbReference type="GO" id="GO:0005634">
    <property type="term" value="C:nucleus"/>
    <property type="evidence" value="ECO:0000250"/>
    <property type="project" value="UniProtKB"/>
</dbReference>
<dbReference type="GO" id="GO:0003677">
    <property type="term" value="F:DNA binding"/>
    <property type="evidence" value="ECO:0000250"/>
    <property type="project" value="TAIR"/>
</dbReference>
<dbReference type="GO" id="GO:0042803">
    <property type="term" value="F:protein homodimerization activity"/>
    <property type="evidence" value="ECO:0000250"/>
    <property type="project" value="UniProtKB"/>
</dbReference>
<dbReference type="GO" id="GO:0000976">
    <property type="term" value="F:transcription cis-regulatory region binding"/>
    <property type="evidence" value="ECO:0000353"/>
    <property type="project" value="TAIR"/>
</dbReference>
<dbReference type="GO" id="GO:0008270">
    <property type="term" value="F:zinc ion binding"/>
    <property type="evidence" value="ECO:0007669"/>
    <property type="project" value="UniProtKB-KW"/>
</dbReference>
<dbReference type="GO" id="GO:0019760">
    <property type="term" value="P:glucosinolate metabolic process"/>
    <property type="evidence" value="ECO:0000315"/>
    <property type="project" value="TAIR"/>
</dbReference>
<dbReference type="FunFam" id="1.10.10.60:FF:000257">
    <property type="entry name" value="Zinc-finger homeodomain protein 2"/>
    <property type="match status" value="1"/>
</dbReference>
<dbReference type="Gene3D" id="1.10.10.60">
    <property type="entry name" value="Homeodomain-like"/>
    <property type="match status" value="1"/>
</dbReference>
<dbReference type="InterPro" id="IPR009057">
    <property type="entry name" value="Homeodomain-like_sf"/>
</dbReference>
<dbReference type="InterPro" id="IPR006455">
    <property type="entry name" value="Homeodomain_ZF_HD"/>
</dbReference>
<dbReference type="InterPro" id="IPR006456">
    <property type="entry name" value="ZF_HD_homeobox_Cys/His_dimer"/>
</dbReference>
<dbReference type="NCBIfam" id="TIGR01565">
    <property type="entry name" value="homeo_ZF_HD"/>
    <property type="match status" value="1"/>
</dbReference>
<dbReference type="NCBIfam" id="TIGR01566">
    <property type="entry name" value="ZF_HD_prot_N"/>
    <property type="match status" value="1"/>
</dbReference>
<dbReference type="PANTHER" id="PTHR31948">
    <property type="entry name" value="ZINC-FINGER HOMEODOMAIN PROTEIN 2"/>
    <property type="match status" value="1"/>
</dbReference>
<dbReference type="PANTHER" id="PTHR31948:SF137">
    <property type="entry name" value="ZINC-FINGER HOMEODOMAIN PROTEIN 9"/>
    <property type="match status" value="1"/>
</dbReference>
<dbReference type="Pfam" id="PF04770">
    <property type="entry name" value="ZF-HD_dimer"/>
    <property type="match status" value="1"/>
</dbReference>
<dbReference type="SUPFAM" id="SSF46689">
    <property type="entry name" value="Homeodomain-like"/>
    <property type="match status" value="1"/>
</dbReference>
<dbReference type="PROSITE" id="PS51523">
    <property type="entry name" value="ZF_HD_DIMER"/>
    <property type="match status" value="1"/>
</dbReference>
<feature type="chain" id="PRO_0000426023" description="Zinc-finger homeodomain protein 9">
    <location>
        <begin position="1"/>
        <end position="312"/>
    </location>
</feature>
<feature type="zinc finger region" description="ZF-HD dimerization-type; degenerate" evidence="2">
    <location>
        <begin position="52"/>
        <end position="103"/>
    </location>
</feature>
<feature type="DNA-binding region" description="Homeobox">
    <location>
        <begin position="192"/>
        <end position="255"/>
    </location>
</feature>
<feature type="region of interest" description="Disordered" evidence="3">
    <location>
        <begin position="1"/>
        <end position="27"/>
    </location>
</feature>
<feature type="region of interest" description="Disordered" evidence="3">
    <location>
        <begin position="128"/>
        <end position="155"/>
    </location>
</feature>
<feature type="region of interest" description="Disordered" evidence="3">
    <location>
        <begin position="253"/>
        <end position="312"/>
    </location>
</feature>
<feature type="compositionally biased region" description="Pro residues" evidence="3">
    <location>
        <begin position="136"/>
        <end position="155"/>
    </location>
</feature>
<feature type="site" description="Required for DNA-binding" evidence="1">
    <location>
        <position position="244"/>
    </location>
</feature>
<feature type="modified residue" description="Phosphoserine" evidence="6">
    <location>
        <position position="13"/>
    </location>
</feature>
<feature type="modified residue" description="Phosphoserine" evidence="6">
    <location>
        <position position="273"/>
    </location>
</feature>
<keyword id="KW-0238">DNA-binding</keyword>
<keyword id="KW-0371">Homeobox</keyword>
<keyword id="KW-0479">Metal-binding</keyword>
<keyword id="KW-0539">Nucleus</keyword>
<keyword id="KW-0597">Phosphoprotein</keyword>
<keyword id="KW-1185">Reference proteome</keyword>
<keyword id="KW-0804">Transcription</keyword>
<keyword id="KW-0805">Transcription regulation</keyword>
<keyword id="KW-0862">Zinc</keyword>
<keyword id="KW-0863">Zinc-finger</keyword>
<reference key="1">
    <citation type="journal article" date="2000" name="DNA Res.">
        <title>Structural analysis of Arabidopsis thaliana chromosome 3. II. Sequence features of the 4,251,695 bp regions covered by 90 P1, TAC and BAC clones.</title>
        <authorList>
            <person name="Kaneko T."/>
            <person name="Katoh T."/>
            <person name="Sato S."/>
            <person name="Nakamura Y."/>
            <person name="Asamizu E."/>
            <person name="Tabata S."/>
        </authorList>
    </citation>
    <scope>NUCLEOTIDE SEQUENCE [LARGE SCALE GENOMIC DNA]</scope>
    <source>
        <strain>cv. Columbia</strain>
    </source>
</reference>
<reference key="2">
    <citation type="journal article" date="2017" name="Plant J.">
        <title>Araport11: a complete reannotation of the Arabidopsis thaliana reference genome.</title>
        <authorList>
            <person name="Cheng C.Y."/>
            <person name="Krishnakumar V."/>
            <person name="Chan A.P."/>
            <person name="Thibaud-Nissen F."/>
            <person name="Schobel S."/>
            <person name="Town C.D."/>
        </authorList>
    </citation>
    <scope>GENOME REANNOTATION</scope>
    <source>
        <strain>cv. Columbia</strain>
    </source>
</reference>
<reference key="3">
    <citation type="journal article" date="2003" name="Science">
        <title>Empirical analysis of transcriptional activity in the Arabidopsis genome.</title>
        <authorList>
            <person name="Yamada K."/>
            <person name="Lim J."/>
            <person name="Dale J.M."/>
            <person name="Chen H."/>
            <person name="Shinn P."/>
            <person name="Palm C.J."/>
            <person name="Southwick A.M."/>
            <person name="Wu H.C."/>
            <person name="Kim C.J."/>
            <person name="Nguyen M."/>
            <person name="Pham P.K."/>
            <person name="Cheuk R.F."/>
            <person name="Karlin-Newmann G."/>
            <person name="Liu S.X."/>
            <person name="Lam B."/>
            <person name="Sakano H."/>
            <person name="Wu T."/>
            <person name="Yu G."/>
            <person name="Miranda M."/>
            <person name="Quach H.L."/>
            <person name="Tripp M."/>
            <person name="Chang C.H."/>
            <person name="Lee J.M."/>
            <person name="Toriumi M.J."/>
            <person name="Chan M.M."/>
            <person name="Tang C.C."/>
            <person name="Onodera C.S."/>
            <person name="Deng J.M."/>
            <person name="Akiyama K."/>
            <person name="Ansari Y."/>
            <person name="Arakawa T."/>
            <person name="Banh J."/>
            <person name="Banno F."/>
            <person name="Bowser L."/>
            <person name="Brooks S.Y."/>
            <person name="Carninci P."/>
            <person name="Chao Q."/>
            <person name="Choy N."/>
            <person name="Enju A."/>
            <person name="Goldsmith A.D."/>
            <person name="Gurjal M."/>
            <person name="Hansen N.F."/>
            <person name="Hayashizaki Y."/>
            <person name="Johnson-Hopson C."/>
            <person name="Hsuan V.W."/>
            <person name="Iida K."/>
            <person name="Karnes M."/>
            <person name="Khan S."/>
            <person name="Koesema E."/>
            <person name="Ishida J."/>
            <person name="Jiang P.X."/>
            <person name="Jones T."/>
            <person name="Kawai J."/>
            <person name="Kamiya A."/>
            <person name="Meyers C."/>
            <person name="Nakajima M."/>
            <person name="Narusaka M."/>
            <person name="Seki M."/>
            <person name="Sakurai T."/>
            <person name="Satou M."/>
            <person name="Tamse R."/>
            <person name="Vaysberg M."/>
            <person name="Wallender E.K."/>
            <person name="Wong C."/>
            <person name="Yamamura Y."/>
            <person name="Yuan S."/>
            <person name="Shinozaki K."/>
            <person name="Davis R.W."/>
            <person name="Theologis A."/>
            <person name="Ecker J.R."/>
        </authorList>
    </citation>
    <scope>NUCLEOTIDE SEQUENCE [LARGE SCALE MRNA]</scope>
    <source>
        <strain>cv. Columbia</strain>
    </source>
</reference>
<reference key="4">
    <citation type="journal article" date="2006" name="Plant Physiol.">
        <title>The Arabidopsis zinc finger-homeodomain genes encode proteins with unique biochemical properties that are coordinately expressed during floral development.</title>
        <authorList>
            <person name="Tan Q.K."/>
            <person name="Irish V.F."/>
        </authorList>
    </citation>
    <scope>INTERACTION WITH ZHD1; ZHD2 AND ZHD11</scope>
    <scope>TISSUE SPECIFICITY</scope>
    <scope>GENE FAMILY</scope>
</reference>
<reference key="5">
    <citation type="journal article" date="2008" name="J. Integr. Plant Biol.">
        <title>Phylogenetic analysis of the plant-specific zinc finger-homeobox and mini zinc finger gene families.</title>
        <authorList>
            <person name="Hu W."/>
            <person name="dePamphilis C.W."/>
            <person name="Ma H."/>
        </authorList>
    </citation>
    <scope>GENE FAMILY</scope>
    <scope>NOMENCLATURE</scope>
</reference>
<reference key="6">
    <citation type="journal article" date="2009" name="Plant Physiol.">
        <title>Large-scale Arabidopsis phosphoproteome profiling reveals novel chloroplast kinase substrates and phosphorylation networks.</title>
        <authorList>
            <person name="Reiland S."/>
            <person name="Messerli G."/>
            <person name="Baerenfaller K."/>
            <person name="Gerrits B."/>
            <person name="Endler A."/>
            <person name="Grossmann J."/>
            <person name="Gruissem W."/>
            <person name="Baginsky S."/>
        </authorList>
    </citation>
    <scope>PHOSPHORYLATION [LARGE SCALE ANALYSIS] AT SER-13 AND SER-273</scope>
    <scope>IDENTIFICATION BY MASS SPECTROMETRY [LARGE SCALE ANALYSIS]</scope>
</reference>
<reference key="7">
    <citation type="journal article" date="2011" name="J. Biol. Chem.">
        <title>Nuclear import and DNA binding of the ZHD5 transcription factor is modulated by a competitive peptide inhibitor in Arabidopsis.</title>
        <authorList>
            <person name="Hong S.-Y."/>
            <person name="Kim O.-K."/>
            <person name="Kim S.-G."/>
            <person name="Yang M.-S."/>
            <person name="Park C.-M."/>
        </authorList>
    </citation>
    <scope>INTERACTION WITH MIF3</scope>
    <scope>GENE FAMILY</scope>
    <scope>NOMENCLATURE</scope>
    <source>
        <strain>cv. Columbia</strain>
    </source>
</reference>
<organism>
    <name type="scientific">Arabidopsis thaliana</name>
    <name type="common">Mouse-ear cress</name>
    <dbReference type="NCBI Taxonomy" id="3702"/>
    <lineage>
        <taxon>Eukaryota</taxon>
        <taxon>Viridiplantae</taxon>
        <taxon>Streptophyta</taxon>
        <taxon>Embryophyta</taxon>
        <taxon>Tracheophyta</taxon>
        <taxon>Spermatophyta</taxon>
        <taxon>Magnoliopsida</taxon>
        <taxon>eudicotyledons</taxon>
        <taxon>Gunneridae</taxon>
        <taxon>Pentapetalae</taxon>
        <taxon>rosids</taxon>
        <taxon>malvids</taxon>
        <taxon>Brassicales</taxon>
        <taxon>Brassicaceae</taxon>
        <taxon>Camelineae</taxon>
        <taxon>Arabidopsis</taxon>
    </lineage>
</organism>
<gene>
    <name type="primary">ZHD9</name>
    <name type="synonym">HB34</name>
    <name type="ordered locus">At3g28920</name>
    <name type="ORF">MYI13.1</name>
</gene>
<comment type="function">
    <text>Putative transcription factor.</text>
</comment>
<comment type="subunit">
    <text evidence="1 4 5">Homo- and heterodimer with other ZFHD proteins (By similarity). Interacts with MIF3; this interaction prevents nuclear localization and DNA-binding to inhibit transcription regulation activity. Binds to ZHD1, ZHD2 and ZHD11.</text>
</comment>
<comment type="interaction">
    <interactant intactId="EBI-1806440">
        <id>Q9LHF0</id>
    </interactant>
    <interactant intactId="EBI-15203222">
        <id>Q8LCT6</id>
        <label>At1g24210</label>
    </interactant>
    <organismsDiffer>false</organismsDiffer>
    <experiments>3</experiments>
</comment>
<comment type="interaction">
    <interactant intactId="EBI-1806440">
        <id>Q9LHF0</id>
    </interactant>
    <interactant intactId="EBI-15193025">
        <id>Q9LXU1</id>
        <label>NOT9B</label>
    </interactant>
    <organismsDiffer>false</organismsDiffer>
    <experiments>3</experiments>
</comment>
<comment type="interaction">
    <interactant intactId="EBI-1806440">
        <id>Q9LHF0</id>
    </interactant>
    <interactant intactId="EBI-1806298">
        <id>Q9FIW9</id>
        <label>ZHD10</label>
    </interactant>
    <organismsDiffer>false</organismsDiffer>
    <experiments>4</experiments>
</comment>
<comment type="interaction">
    <interactant intactId="EBI-1806440">
        <id>Q9LHF0</id>
    </interactant>
    <interactant intactId="EBI-1806420">
        <id>Q9M9S0</id>
        <label>ZHD4</label>
    </interactant>
    <organismsDiffer>false</organismsDiffer>
    <experiments>3</experiments>
</comment>
<comment type="interaction">
    <interactant intactId="EBI-1806440">
        <id>Q9LHF0</id>
    </interactant>
    <interactant intactId="EBI-1806169">
        <id>Q9FRL5</id>
        <label>ZHD5</label>
    </interactant>
    <organismsDiffer>false</organismsDiffer>
    <experiments>3</experiments>
</comment>
<comment type="interaction">
    <interactant intactId="EBI-1806440">
        <id>Q9LHF0</id>
    </interactant>
    <interactant intactId="EBI-1806363">
        <id>Q9ZPW7</id>
        <label>ZHD6</label>
    </interactant>
    <organismsDiffer>false</organismsDiffer>
    <experiments>3</experiments>
</comment>
<comment type="interaction">
    <interactant intactId="EBI-1806440">
        <id>Q9LHF0</id>
    </interactant>
    <interactant intactId="EBI-1806382">
        <id>Q9SVL0</id>
        <label>ZHD7</label>
    </interactant>
    <organismsDiffer>false</organismsDiffer>
    <experiments>3</experiments>
</comment>
<comment type="interaction">
    <interactant intactId="EBI-1806440">
        <id>Q9LHF0</id>
    </interactant>
    <interactant intactId="EBI-1806405">
        <id>Q9LXG0</id>
        <label>ZHD8</label>
    </interactant>
    <organismsDiffer>false</organismsDiffer>
    <experiments>3</experiments>
</comment>
<comment type="subcellular location">
    <subcellularLocation>
        <location evidence="1">Nucleus</location>
    </subcellularLocation>
    <text>Interactions with MIF proteins prevent nuclear subcellular location and leads to a scattered repartition throughout the cytoplasm.</text>
</comment>
<comment type="tissue specificity">
    <text evidence="4">Mostly expressed in flowers, stems and inflorescence and, to a lower extent, in leaves and stems.</text>
</comment>
<comment type="domain">
    <text>The homeodomain differs form the typical one by having namely 4 instead of 3 extra amino acids inserted in the loop between helix 1 and helix 2.</text>
</comment>
<evidence type="ECO:0000250" key="1"/>
<evidence type="ECO:0000255" key="2">
    <source>
        <dbReference type="PROSITE-ProRule" id="PRU00856"/>
    </source>
</evidence>
<evidence type="ECO:0000256" key="3">
    <source>
        <dbReference type="SAM" id="MobiDB-lite"/>
    </source>
</evidence>
<evidence type="ECO:0000269" key="4">
    <source>
    </source>
</evidence>
<evidence type="ECO:0000269" key="5">
    <source>
    </source>
</evidence>
<evidence type="ECO:0007744" key="6">
    <source>
    </source>
</evidence>